<gene>
    <name evidence="1" type="primary">hutH</name>
    <name type="ordered locus">PsycPRwf_0850</name>
</gene>
<organism>
    <name type="scientific">Psychrobacter sp. (strain PRwf-1)</name>
    <dbReference type="NCBI Taxonomy" id="349106"/>
    <lineage>
        <taxon>Bacteria</taxon>
        <taxon>Pseudomonadati</taxon>
        <taxon>Pseudomonadota</taxon>
        <taxon>Gammaproteobacteria</taxon>
        <taxon>Moraxellales</taxon>
        <taxon>Moraxellaceae</taxon>
        <taxon>Psychrobacter</taxon>
    </lineage>
</organism>
<comment type="catalytic activity">
    <reaction evidence="1">
        <text>L-histidine = trans-urocanate + NH4(+)</text>
        <dbReference type="Rhea" id="RHEA:21232"/>
        <dbReference type="ChEBI" id="CHEBI:17771"/>
        <dbReference type="ChEBI" id="CHEBI:28938"/>
        <dbReference type="ChEBI" id="CHEBI:57595"/>
        <dbReference type="EC" id="4.3.1.3"/>
    </reaction>
</comment>
<comment type="pathway">
    <text evidence="1">Amino-acid degradation; L-histidine degradation into L-glutamate; N-formimidoyl-L-glutamate from L-histidine: step 1/3.</text>
</comment>
<comment type="subcellular location">
    <subcellularLocation>
        <location evidence="1">Cytoplasm</location>
    </subcellularLocation>
</comment>
<comment type="PTM">
    <text evidence="1">Contains an active site 4-methylidene-imidazol-5-one (MIO), which is formed autocatalytically by cyclization and dehydration of residues Ala-Ser-Gly.</text>
</comment>
<comment type="similarity">
    <text evidence="1">Belongs to the PAL/histidase family.</text>
</comment>
<accession>A5WDR1</accession>
<keyword id="KW-0963">Cytoplasm</keyword>
<keyword id="KW-0369">Histidine metabolism</keyword>
<keyword id="KW-0456">Lyase</keyword>
<protein>
    <recommendedName>
        <fullName evidence="1">Histidine ammonia-lyase</fullName>
        <shortName evidence="1">Histidase</shortName>
        <ecNumber evidence="1">4.3.1.3</ecNumber>
    </recommendedName>
</protein>
<evidence type="ECO:0000255" key="1">
    <source>
        <dbReference type="HAMAP-Rule" id="MF_00229"/>
    </source>
</evidence>
<proteinExistence type="inferred from homology"/>
<feature type="chain" id="PRO_1000071786" description="Histidine ammonia-lyase">
    <location>
        <begin position="1"/>
        <end position="519"/>
    </location>
</feature>
<feature type="modified residue" description="2,3-didehydroalanine (Ser)" evidence="1">
    <location>
        <position position="147"/>
    </location>
</feature>
<feature type="cross-link" description="5-imidazolinone (Ala-Gly)" evidence="1">
    <location>
        <begin position="146"/>
        <end position="148"/>
    </location>
</feature>
<name>HUTH_PSYWF</name>
<reference key="1">
    <citation type="submission" date="2007-05" db="EMBL/GenBank/DDBJ databases">
        <title>Complete sequence of chromosome of Psychrobacter sp. PRwf-1.</title>
        <authorList>
            <consortium name="US DOE Joint Genome Institute"/>
            <person name="Copeland A."/>
            <person name="Lucas S."/>
            <person name="Lapidus A."/>
            <person name="Barry K."/>
            <person name="Detter J.C."/>
            <person name="Glavina del Rio T."/>
            <person name="Hammon N."/>
            <person name="Israni S."/>
            <person name="Dalin E."/>
            <person name="Tice H."/>
            <person name="Pitluck S."/>
            <person name="Chain P."/>
            <person name="Malfatti S."/>
            <person name="Shin M."/>
            <person name="Vergez L."/>
            <person name="Schmutz J."/>
            <person name="Larimer F."/>
            <person name="Land M."/>
            <person name="Hauser L."/>
            <person name="Kyrpides N."/>
            <person name="Kim E."/>
            <person name="Tiedje J."/>
            <person name="Richardson P."/>
        </authorList>
    </citation>
    <scope>NUCLEOTIDE SEQUENCE [LARGE SCALE GENOMIC DNA]</scope>
    <source>
        <strain>PRwf-1</strain>
    </source>
</reference>
<dbReference type="EC" id="4.3.1.3" evidence="1"/>
<dbReference type="EMBL" id="CP000713">
    <property type="protein sequence ID" value="ABQ93802.1"/>
    <property type="molecule type" value="Genomic_DNA"/>
</dbReference>
<dbReference type="SMR" id="A5WDR1"/>
<dbReference type="STRING" id="349106.PsycPRwf_0850"/>
<dbReference type="KEGG" id="prw:PsycPRwf_0850"/>
<dbReference type="eggNOG" id="COG2986">
    <property type="taxonomic scope" value="Bacteria"/>
</dbReference>
<dbReference type="HOGENOM" id="CLU_014801_4_0_6"/>
<dbReference type="UniPathway" id="UPA00379">
    <property type="reaction ID" value="UER00549"/>
</dbReference>
<dbReference type="GO" id="GO:0005737">
    <property type="term" value="C:cytoplasm"/>
    <property type="evidence" value="ECO:0007669"/>
    <property type="project" value="UniProtKB-SubCell"/>
</dbReference>
<dbReference type="GO" id="GO:0004397">
    <property type="term" value="F:histidine ammonia-lyase activity"/>
    <property type="evidence" value="ECO:0007669"/>
    <property type="project" value="UniProtKB-UniRule"/>
</dbReference>
<dbReference type="GO" id="GO:0019556">
    <property type="term" value="P:L-histidine catabolic process to glutamate and formamide"/>
    <property type="evidence" value="ECO:0007669"/>
    <property type="project" value="UniProtKB-UniPathway"/>
</dbReference>
<dbReference type="GO" id="GO:0019557">
    <property type="term" value="P:L-histidine catabolic process to glutamate and formate"/>
    <property type="evidence" value="ECO:0007669"/>
    <property type="project" value="UniProtKB-UniPathway"/>
</dbReference>
<dbReference type="CDD" id="cd00332">
    <property type="entry name" value="PAL-HAL"/>
    <property type="match status" value="1"/>
</dbReference>
<dbReference type="FunFam" id="1.10.275.10:FF:000005">
    <property type="entry name" value="Histidine ammonia-lyase"/>
    <property type="match status" value="1"/>
</dbReference>
<dbReference type="FunFam" id="1.20.200.10:FF:000003">
    <property type="entry name" value="Histidine ammonia-lyase"/>
    <property type="match status" value="1"/>
</dbReference>
<dbReference type="Gene3D" id="1.20.200.10">
    <property type="entry name" value="Fumarase/aspartase (Central domain)"/>
    <property type="match status" value="1"/>
</dbReference>
<dbReference type="Gene3D" id="1.10.275.10">
    <property type="entry name" value="Fumarase/aspartase (N-terminal domain)"/>
    <property type="match status" value="1"/>
</dbReference>
<dbReference type="HAMAP" id="MF_00229">
    <property type="entry name" value="His_ammonia_lyase"/>
    <property type="match status" value="1"/>
</dbReference>
<dbReference type="InterPro" id="IPR001106">
    <property type="entry name" value="Aromatic_Lyase"/>
</dbReference>
<dbReference type="InterPro" id="IPR024083">
    <property type="entry name" value="Fumarase/histidase_N"/>
</dbReference>
<dbReference type="InterPro" id="IPR005921">
    <property type="entry name" value="HutH"/>
</dbReference>
<dbReference type="InterPro" id="IPR008948">
    <property type="entry name" value="L-Aspartase-like"/>
</dbReference>
<dbReference type="InterPro" id="IPR022313">
    <property type="entry name" value="Phe/His_NH3-lyase_AS"/>
</dbReference>
<dbReference type="NCBIfam" id="TIGR01225">
    <property type="entry name" value="hutH"/>
    <property type="match status" value="1"/>
</dbReference>
<dbReference type="NCBIfam" id="NF006871">
    <property type="entry name" value="PRK09367.1"/>
    <property type="match status" value="1"/>
</dbReference>
<dbReference type="PANTHER" id="PTHR10362">
    <property type="entry name" value="HISTIDINE AMMONIA-LYASE"/>
    <property type="match status" value="1"/>
</dbReference>
<dbReference type="Pfam" id="PF00221">
    <property type="entry name" value="Lyase_aromatic"/>
    <property type="match status" value="1"/>
</dbReference>
<dbReference type="SUPFAM" id="SSF48557">
    <property type="entry name" value="L-aspartase-like"/>
    <property type="match status" value="1"/>
</dbReference>
<dbReference type="PROSITE" id="PS00488">
    <property type="entry name" value="PAL_HISTIDASE"/>
    <property type="match status" value="1"/>
</dbReference>
<sequence>MPSTQTLRLIPRKLTLAQLRQVYDSPVQVSLDDSAYKDIDASHDCVKEIIARDKSAYGINTGFGLLAKTRISDDQLGLLQYNLIVSHSVGTGERLEDGVVRLIMVMKVASLAQGFSGVRRKVIDGLIGLINHDIIPHIPAKGSVGASGDLAPLSHMTLTLLGQGTCYINGQEMSAKDALAQAGLEPVTLAAKEGLALINGTQVSTALTLRGYFLARDLVSTATVVGALSVDAARGSDSPFDARIHELRGHHGQIQVAKAHRRLIAGSEIRASHTENDDRVQDPYCLRCQPQVVGACLDIINQAGHTLLIEANAVTDNPLIFRDEDGPVAISGGNFHAEPVAFAADTLALAIAEIGSMSERRVALLIDATLNGGLPPFLVDNPGVNSGFMIAHVTAAALASENKSLAHPASVDSIPTSANQEDHVSMATFAGRRLYDMAQNTATIVGIELLAAGQGIDFHKGLQTSELLTKAHALLREKVSFYDKDRYLAPDIEAAKQLVLSAALNEHWSELRADWFLQD</sequence>